<keyword id="KW-0066">ATP synthesis</keyword>
<keyword id="KW-0997">Cell inner membrane</keyword>
<keyword id="KW-1003">Cell membrane</keyword>
<keyword id="KW-0139">CF(1)</keyword>
<keyword id="KW-0375">Hydrogen ion transport</keyword>
<keyword id="KW-0406">Ion transport</keyword>
<keyword id="KW-0472">Membrane</keyword>
<keyword id="KW-0813">Transport</keyword>
<comment type="function">
    <text evidence="1">Produces ATP from ADP in the presence of a proton gradient across the membrane. The gamma chain is believed to be important in regulating ATPase activity and the flow of protons through the CF(0) complex.</text>
</comment>
<comment type="subunit">
    <text evidence="1">F-type ATPases have 2 components, CF(1) - the catalytic core - and CF(0) - the membrane proton channel. CF(1) has five subunits: alpha(3), beta(3), gamma(1), delta(1), epsilon(1). CF(0) has three main subunits: a, b and c.</text>
</comment>
<comment type="subcellular location">
    <subcellularLocation>
        <location evidence="1">Cell inner membrane</location>
        <topology evidence="1">Peripheral membrane protein</topology>
    </subcellularLocation>
</comment>
<comment type="similarity">
    <text evidence="1">Belongs to the ATPase gamma chain family.</text>
</comment>
<name>ATPG_NEIMF</name>
<sequence length="291" mass="32536">MAVGKEILTKIRSVQNTQKITKAMQMVSTSKMRKTQERMRLARPYAEKVRMVMSHLAQTNTDHGIPLLESHREIRRVGFILITSDKGLCGGLNANVLKKFLAQVQEYRNQGIEEEIVCLGSKGLMACQSIGLNVIASAVNLGDTPKMEMLLGPLTELFQRYEKHEIDRIHLVYSGFVNTMRQEPRMEVLLPIGENVIGDSAPKSPFSWEYRYEPTALAVLEYLVRRYLESVVYQALSDNMASEQAARMVAMKAATDNAGNAIKELRLVYNKSRQAAITTELSEIVAGAAAV</sequence>
<dbReference type="EMBL" id="AM421808">
    <property type="protein sequence ID" value="CAM11068.1"/>
    <property type="molecule type" value="Genomic_DNA"/>
</dbReference>
<dbReference type="RefSeq" id="WP_002226742.1">
    <property type="nucleotide sequence ID" value="NC_008767.1"/>
</dbReference>
<dbReference type="SMR" id="A1KW12"/>
<dbReference type="KEGG" id="nmc:NMC1907"/>
<dbReference type="HOGENOM" id="CLU_050669_0_1_4"/>
<dbReference type="Proteomes" id="UP000002286">
    <property type="component" value="Chromosome"/>
</dbReference>
<dbReference type="GO" id="GO:0005886">
    <property type="term" value="C:plasma membrane"/>
    <property type="evidence" value="ECO:0007669"/>
    <property type="project" value="UniProtKB-SubCell"/>
</dbReference>
<dbReference type="GO" id="GO:0045259">
    <property type="term" value="C:proton-transporting ATP synthase complex"/>
    <property type="evidence" value="ECO:0007669"/>
    <property type="project" value="UniProtKB-KW"/>
</dbReference>
<dbReference type="GO" id="GO:0005524">
    <property type="term" value="F:ATP binding"/>
    <property type="evidence" value="ECO:0007669"/>
    <property type="project" value="UniProtKB-UniRule"/>
</dbReference>
<dbReference type="GO" id="GO:0046933">
    <property type="term" value="F:proton-transporting ATP synthase activity, rotational mechanism"/>
    <property type="evidence" value="ECO:0007669"/>
    <property type="project" value="UniProtKB-UniRule"/>
</dbReference>
<dbReference type="GO" id="GO:0042777">
    <property type="term" value="P:proton motive force-driven plasma membrane ATP synthesis"/>
    <property type="evidence" value="ECO:0007669"/>
    <property type="project" value="UniProtKB-UniRule"/>
</dbReference>
<dbReference type="CDD" id="cd12151">
    <property type="entry name" value="F1-ATPase_gamma"/>
    <property type="match status" value="1"/>
</dbReference>
<dbReference type="FunFam" id="1.10.287.80:FF:000005">
    <property type="entry name" value="ATP synthase gamma chain"/>
    <property type="match status" value="1"/>
</dbReference>
<dbReference type="FunFam" id="3.40.1380.10:FF:000008">
    <property type="entry name" value="ATP synthase gamma chain"/>
    <property type="match status" value="1"/>
</dbReference>
<dbReference type="Gene3D" id="3.40.1380.10">
    <property type="match status" value="1"/>
</dbReference>
<dbReference type="Gene3D" id="1.10.287.80">
    <property type="entry name" value="ATP synthase, gamma subunit, helix hairpin domain"/>
    <property type="match status" value="1"/>
</dbReference>
<dbReference type="HAMAP" id="MF_00815">
    <property type="entry name" value="ATP_synth_gamma_bact"/>
    <property type="match status" value="1"/>
</dbReference>
<dbReference type="InterPro" id="IPR035968">
    <property type="entry name" value="ATP_synth_F1_ATPase_gsu"/>
</dbReference>
<dbReference type="InterPro" id="IPR000131">
    <property type="entry name" value="ATP_synth_F1_gsu"/>
</dbReference>
<dbReference type="InterPro" id="IPR023632">
    <property type="entry name" value="ATP_synth_F1_gsu_CS"/>
</dbReference>
<dbReference type="NCBIfam" id="TIGR01146">
    <property type="entry name" value="ATPsyn_F1gamma"/>
    <property type="match status" value="1"/>
</dbReference>
<dbReference type="NCBIfam" id="NF004144">
    <property type="entry name" value="PRK05621.1-1"/>
    <property type="match status" value="1"/>
</dbReference>
<dbReference type="PANTHER" id="PTHR11693">
    <property type="entry name" value="ATP SYNTHASE GAMMA CHAIN"/>
    <property type="match status" value="1"/>
</dbReference>
<dbReference type="PANTHER" id="PTHR11693:SF22">
    <property type="entry name" value="ATP SYNTHASE SUBUNIT GAMMA, MITOCHONDRIAL"/>
    <property type="match status" value="1"/>
</dbReference>
<dbReference type="Pfam" id="PF00231">
    <property type="entry name" value="ATP-synt"/>
    <property type="match status" value="1"/>
</dbReference>
<dbReference type="PRINTS" id="PR00126">
    <property type="entry name" value="ATPASEGAMMA"/>
</dbReference>
<dbReference type="SUPFAM" id="SSF52943">
    <property type="entry name" value="ATP synthase (F1-ATPase), gamma subunit"/>
    <property type="match status" value="1"/>
</dbReference>
<dbReference type="PROSITE" id="PS00153">
    <property type="entry name" value="ATPASE_GAMMA"/>
    <property type="match status" value="1"/>
</dbReference>
<protein>
    <recommendedName>
        <fullName evidence="1">ATP synthase gamma chain</fullName>
    </recommendedName>
    <alternativeName>
        <fullName evidence="1">ATP synthase F1 sector gamma subunit</fullName>
    </alternativeName>
    <alternativeName>
        <fullName evidence="1">F-ATPase gamma subunit</fullName>
    </alternativeName>
</protein>
<organism>
    <name type="scientific">Neisseria meningitidis serogroup C / serotype 2a (strain ATCC 700532 / DSM 15464 / FAM18)</name>
    <dbReference type="NCBI Taxonomy" id="272831"/>
    <lineage>
        <taxon>Bacteria</taxon>
        <taxon>Pseudomonadati</taxon>
        <taxon>Pseudomonadota</taxon>
        <taxon>Betaproteobacteria</taxon>
        <taxon>Neisseriales</taxon>
        <taxon>Neisseriaceae</taxon>
        <taxon>Neisseria</taxon>
    </lineage>
</organism>
<evidence type="ECO:0000255" key="1">
    <source>
        <dbReference type="HAMAP-Rule" id="MF_00815"/>
    </source>
</evidence>
<proteinExistence type="inferred from homology"/>
<reference key="1">
    <citation type="journal article" date="2007" name="PLoS Genet.">
        <title>Meningococcal genetic variation mechanisms viewed through comparative analysis of serogroup C strain FAM18.</title>
        <authorList>
            <person name="Bentley S.D."/>
            <person name="Vernikos G.S."/>
            <person name="Snyder L.A.S."/>
            <person name="Churcher C."/>
            <person name="Arrowsmith C."/>
            <person name="Chillingworth T."/>
            <person name="Cronin A."/>
            <person name="Davis P.H."/>
            <person name="Holroyd N.E."/>
            <person name="Jagels K."/>
            <person name="Maddison M."/>
            <person name="Moule S."/>
            <person name="Rabbinowitsch E."/>
            <person name="Sharp S."/>
            <person name="Unwin L."/>
            <person name="Whitehead S."/>
            <person name="Quail M.A."/>
            <person name="Achtman M."/>
            <person name="Barrell B.G."/>
            <person name="Saunders N.J."/>
            <person name="Parkhill J."/>
        </authorList>
    </citation>
    <scope>NUCLEOTIDE SEQUENCE [LARGE SCALE GENOMIC DNA]</scope>
    <source>
        <strain>ATCC 700532 / DSM 15464 / FAM18</strain>
    </source>
</reference>
<accession>A1KW12</accession>
<gene>
    <name evidence="1" type="primary">atpG</name>
    <name type="ordered locus">NMC1907</name>
</gene>
<feature type="chain" id="PRO_1000053265" description="ATP synthase gamma chain">
    <location>
        <begin position="1"/>
        <end position="291"/>
    </location>
</feature>